<organism>
    <name type="scientific">Thermobifida fusca (strain YX)</name>
    <dbReference type="NCBI Taxonomy" id="269800"/>
    <lineage>
        <taxon>Bacteria</taxon>
        <taxon>Bacillati</taxon>
        <taxon>Actinomycetota</taxon>
        <taxon>Actinomycetes</taxon>
        <taxon>Streptosporangiales</taxon>
        <taxon>Nocardiopsidaceae</taxon>
        <taxon>Thermobifida</taxon>
    </lineage>
</organism>
<gene>
    <name evidence="1" type="primary">rplC</name>
    <name type="ordered locus">Tfu_2646</name>
</gene>
<dbReference type="EMBL" id="CP000088">
    <property type="protein sequence ID" value="AAZ56679.1"/>
    <property type="molecule type" value="Genomic_DNA"/>
</dbReference>
<dbReference type="RefSeq" id="WP_011293069.1">
    <property type="nucleotide sequence ID" value="NC_007333.1"/>
</dbReference>
<dbReference type="SMR" id="Q47LJ3"/>
<dbReference type="STRING" id="269800.Tfu_2646"/>
<dbReference type="KEGG" id="tfu:Tfu_2646"/>
<dbReference type="eggNOG" id="COG0087">
    <property type="taxonomic scope" value="Bacteria"/>
</dbReference>
<dbReference type="HOGENOM" id="CLU_044142_4_1_11"/>
<dbReference type="OrthoDB" id="9806135at2"/>
<dbReference type="GO" id="GO:0022625">
    <property type="term" value="C:cytosolic large ribosomal subunit"/>
    <property type="evidence" value="ECO:0007669"/>
    <property type="project" value="TreeGrafter"/>
</dbReference>
<dbReference type="GO" id="GO:0019843">
    <property type="term" value="F:rRNA binding"/>
    <property type="evidence" value="ECO:0007669"/>
    <property type="project" value="UniProtKB-UniRule"/>
</dbReference>
<dbReference type="GO" id="GO:0003735">
    <property type="term" value="F:structural constituent of ribosome"/>
    <property type="evidence" value="ECO:0007669"/>
    <property type="project" value="InterPro"/>
</dbReference>
<dbReference type="GO" id="GO:0006412">
    <property type="term" value="P:translation"/>
    <property type="evidence" value="ECO:0007669"/>
    <property type="project" value="UniProtKB-UniRule"/>
</dbReference>
<dbReference type="FunFam" id="2.40.30.10:FF:000004">
    <property type="entry name" value="50S ribosomal protein L3"/>
    <property type="match status" value="1"/>
</dbReference>
<dbReference type="FunFam" id="3.30.160.810:FF:000001">
    <property type="entry name" value="50S ribosomal protein L3"/>
    <property type="match status" value="1"/>
</dbReference>
<dbReference type="Gene3D" id="3.30.160.810">
    <property type="match status" value="1"/>
</dbReference>
<dbReference type="Gene3D" id="2.40.30.10">
    <property type="entry name" value="Translation factors"/>
    <property type="match status" value="1"/>
</dbReference>
<dbReference type="HAMAP" id="MF_01325_B">
    <property type="entry name" value="Ribosomal_uL3_B"/>
    <property type="match status" value="1"/>
</dbReference>
<dbReference type="InterPro" id="IPR000597">
    <property type="entry name" value="Ribosomal_uL3"/>
</dbReference>
<dbReference type="InterPro" id="IPR019927">
    <property type="entry name" value="Ribosomal_uL3_bac/org-type"/>
</dbReference>
<dbReference type="InterPro" id="IPR019926">
    <property type="entry name" value="Ribosomal_uL3_CS"/>
</dbReference>
<dbReference type="InterPro" id="IPR009000">
    <property type="entry name" value="Transl_B-barrel_sf"/>
</dbReference>
<dbReference type="NCBIfam" id="TIGR03625">
    <property type="entry name" value="L3_bact"/>
    <property type="match status" value="1"/>
</dbReference>
<dbReference type="PANTHER" id="PTHR11229">
    <property type="entry name" value="50S RIBOSOMAL PROTEIN L3"/>
    <property type="match status" value="1"/>
</dbReference>
<dbReference type="PANTHER" id="PTHR11229:SF16">
    <property type="entry name" value="LARGE RIBOSOMAL SUBUNIT PROTEIN UL3C"/>
    <property type="match status" value="1"/>
</dbReference>
<dbReference type="Pfam" id="PF00297">
    <property type="entry name" value="Ribosomal_L3"/>
    <property type="match status" value="1"/>
</dbReference>
<dbReference type="SUPFAM" id="SSF50447">
    <property type="entry name" value="Translation proteins"/>
    <property type="match status" value="1"/>
</dbReference>
<dbReference type="PROSITE" id="PS00474">
    <property type="entry name" value="RIBOSOMAL_L3"/>
    <property type="match status" value="1"/>
</dbReference>
<reference key="1">
    <citation type="journal article" date="2007" name="J. Bacteriol.">
        <title>Genome sequence and analysis of the soil cellulolytic actinomycete Thermobifida fusca YX.</title>
        <authorList>
            <person name="Lykidis A."/>
            <person name="Mavromatis K."/>
            <person name="Ivanova N."/>
            <person name="Anderson I."/>
            <person name="Land M."/>
            <person name="DiBartolo G."/>
            <person name="Martinez M."/>
            <person name="Lapidus A."/>
            <person name="Lucas S."/>
            <person name="Copeland A."/>
            <person name="Richardson P."/>
            <person name="Wilson D.B."/>
            <person name="Kyrpides N."/>
        </authorList>
    </citation>
    <scope>NUCLEOTIDE SEQUENCE [LARGE SCALE GENOMIC DNA]</scope>
    <source>
        <strain>YX</strain>
    </source>
</reference>
<comment type="function">
    <text evidence="1">One of the primary rRNA binding proteins, it binds directly near the 3'-end of the 23S rRNA, where it nucleates assembly of the 50S subunit.</text>
</comment>
<comment type="subunit">
    <text evidence="1">Part of the 50S ribosomal subunit. Forms a cluster with proteins L14 and L19.</text>
</comment>
<comment type="similarity">
    <text evidence="1">Belongs to the universal ribosomal protein uL3 family.</text>
</comment>
<accession>Q47LJ3</accession>
<sequence length="216" mass="22995">MTTKQIKGVLGEKLGMTQVFDESGKVVPVTVLKAGPAVVTRVRTPETDGYSAIQLGYGHINPRKVNKPLGDYLRKHNLTPRRHYVEVRTSDASEYTVGQEITADVFQPGEKVDVTGKTKGKGYAGVMKRHGFGGLGASHGTQRKHRSPGSIGGCATPGRVFKGMRMAGRMGNVRRTVQNLTVHSVDAEKGLLLVKGAVPGPNGGLVLVRTAVKGGK</sequence>
<protein>
    <recommendedName>
        <fullName evidence="1">Large ribosomal subunit protein uL3</fullName>
    </recommendedName>
    <alternativeName>
        <fullName evidence="3">50S ribosomal protein L3</fullName>
    </alternativeName>
</protein>
<proteinExistence type="inferred from homology"/>
<feature type="chain" id="PRO_0000241427" description="Large ribosomal subunit protein uL3">
    <location>
        <begin position="1"/>
        <end position="216"/>
    </location>
</feature>
<feature type="region of interest" description="Disordered" evidence="2">
    <location>
        <begin position="135"/>
        <end position="156"/>
    </location>
</feature>
<evidence type="ECO:0000255" key="1">
    <source>
        <dbReference type="HAMAP-Rule" id="MF_01325"/>
    </source>
</evidence>
<evidence type="ECO:0000256" key="2">
    <source>
        <dbReference type="SAM" id="MobiDB-lite"/>
    </source>
</evidence>
<evidence type="ECO:0000305" key="3"/>
<keyword id="KW-0687">Ribonucleoprotein</keyword>
<keyword id="KW-0689">Ribosomal protein</keyword>
<keyword id="KW-0694">RNA-binding</keyword>
<keyword id="KW-0699">rRNA-binding</keyword>
<name>RL3_THEFY</name>